<dbReference type="EMBL" id="X14788">
    <property type="protein sequence ID" value="CAA32890.1"/>
    <property type="molecule type" value="mRNA"/>
</dbReference>
<dbReference type="EMBL" id="X60002">
    <property type="protein sequence ID" value="CAA42619.1"/>
    <property type="molecule type" value="mRNA"/>
</dbReference>
<dbReference type="PIR" id="A35663">
    <property type="entry name" value="A35663"/>
</dbReference>
<dbReference type="PIR" id="S03343">
    <property type="entry name" value="S03343"/>
</dbReference>
<dbReference type="PIR" id="S22299">
    <property type="entry name" value="S22299"/>
</dbReference>
<dbReference type="RefSeq" id="NP_112279.1">
    <molecule id="P15337-1"/>
    <property type="nucleotide sequence ID" value="NM_031017.2"/>
</dbReference>
<dbReference type="RefSeq" id="NP_604392.2">
    <molecule id="P15337-2"/>
    <property type="nucleotide sequence ID" value="NM_134443.2"/>
</dbReference>
<dbReference type="RefSeq" id="XP_006245127.1">
    <property type="nucleotide sequence ID" value="XM_006245065.3"/>
</dbReference>
<dbReference type="RefSeq" id="XP_006245128.1">
    <property type="nucleotide sequence ID" value="XM_006245066.3"/>
</dbReference>
<dbReference type="RefSeq" id="XP_038940173.1">
    <molecule id="P15337-1"/>
    <property type="nucleotide sequence ID" value="XM_039084245.2"/>
</dbReference>
<dbReference type="PDB" id="1KDX">
    <property type="method" value="NMR"/>
    <property type="chains" value="B=105-132"/>
</dbReference>
<dbReference type="PDBsum" id="1KDX"/>
<dbReference type="BMRB" id="P15337"/>
<dbReference type="SMR" id="P15337"/>
<dbReference type="BioGRID" id="249546">
    <property type="interactions" value="4"/>
</dbReference>
<dbReference type="DIP" id="DIP-36407N"/>
<dbReference type="FunCoup" id="P15337">
    <property type="interactions" value="4567"/>
</dbReference>
<dbReference type="IntAct" id="P15337">
    <property type="interactions" value="3"/>
</dbReference>
<dbReference type="MINT" id="P15337"/>
<dbReference type="STRING" id="10116.ENSRNOP00000018326"/>
<dbReference type="GlyGen" id="P15337">
    <property type="glycosylation" value="4 sites, 1 O-linked glycan (4 sites)"/>
</dbReference>
<dbReference type="iPTMnet" id="P15337"/>
<dbReference type="PhosphoSitePlus" id="P15337"/>
<dbReference type="PaxDb" id="10116-ENSRNOP00000018326"/>
<dbReference type="ABCD" id="P15337">
    <property type="antibodies" value="1 sequenced antibody"/>
</dbReference>
<dbReference type="Ensembl" id="ENSRNOT00000018326.6">
    <molecule id="P15337-1"/>
    <property type="protein sequence ID" value="ENSRNOP00000018326.1"/>
    <property type="gene ID" value="ENSRNOG00000013412.8"/>
</dbReference>
<dbReference type="GeneID" id="81646"/>
<dbReference type="KEGG" id="rno:81646"/>
<dbReference type="UCSC" id="RGD:620218">
    <molecule id="P15337-2"/>
    <property type="organism name" value="rat"/>
</dbReference>
<dbReference type="AGR" id="RGD:620218"/>
<dbReference type="CTD" id="1385"/>
<dbReference type="RGD" id="620218">
    <property type="gene designation" value="Creb1"/>
</dbReference>
<dbReference type="VEuPathDB" id="HostDB:ENSRNOG00000013412"/>
<dbReference type="eggNOG" id="KOG3584">
    <property type="taxonomic scope" value="Eukaryota"/>
</dbReference>
<dbReference type="GeneTree" id="ENSGT00940000155408"/>
<dbReference type="HOGENOM" id="CLU_042675_0_1_1"/>
<dbReference type="InParanoid" id="P15337"/>
<dbReference type="OMA" id="QXISTIA"/>
<dbReference type="OrthoDB" id="5970722at2759"/>
<dbReference type="PhylomeDB" id="P15337"/>
<dbReference type="TreeFam" id="TF106464"/>
<dbReference type="Reactome" id="R-RNO-198693">
    <molecule id="P15337-1"/>
    <property type="pathway name" value="AKT phosphorylates targets in the nucleus"/>
</dbReference>
<dbReference type="Reactome" id="R-RNO-199920">
    <molecule id="P15337-1"/>
    <property type="pathway name" value="CREB phosphorylation"/>
</dbReference>
<dbReference type="Reactome" id="R-RNO-375165">
    <molecule id="P15337-1"/>
    <property type="pathway name" value="NCAM signaling for neurite out-growth"/>
</dbReference>
<dbReference type="Reactome" id="R-RNO-442742">
    <molecule id="P15337-1"/>
    <property type="pathway name" value="CREB1 phosphorylation through NMDA receptor-mediated activation of RAS signaling"/>
</dbReference>
<dbReference type="Reactome" id="R-RNO-881907">
    <molecule id="P15337-1"/>
    <property type="pathway name" value="Gastrin-CREB signalling pathway via PKC and MAPK"/>
</dbReference>
<dbReference type="Reactome" id="R-RNO-9031628">
    <molecule id="P15337-1"/>
    <property type="pathway name" value="NGF-stimulated transcription"/>
</dbReference>
<dbReference type="Reactome" id="R-RNO-9634638">
    <molecule id="P15337-1"/>
    <property type="pathway name" value="Estrogen-dependent nuclear events downstream of ESR-membrane signaling"/>
</dbReference>
<dbReference type="EvolutionaryTrace" id="P15337"/>
<dbReference type="PRO" id="PR:P15337"/>
<dbReference type="Proteomes" id="UP000002494">
    <property type="component" value="Chromosome 9"/>
</dbReference>
<dbReference type="Bgee" id="ENSRNOG00000013412">
    <property type="expression patterns" value="Expressed in testis and 18 other cell types or tissues"/>
</dbReference>
<dbReference type="GO" id="GO:1990589">
    <property type="term" value="C:ATF4-CREB1 transcription factor complex"/>
    <property type="evidence" value="ECO:0000266"/>
    <property type="project" value="RGD"/>
</dbReference>
<dbReference type="GO" id="GO:0030424">
    <property type="term" value="C:axon"/>
    <property type="evidence" value="ECO:0000314"/>
    <property type="project" value="RGD"/>
</dbReference>
<dbReference type="GO" id="GO:0005813">
    <property type="term" value="C:centrosome"/>
    <property type="evidence" value="ECO:0007669"/>
    <property type="project" value="Ensembl"/>
</dbReference>
<dbReference type="GO" id="GO:0000785">
    <property type="term" value="C:chromatin"/>
    <property type="evidence" value="ECO:0000314"/>
    <property type="project" value="BHF-UCL"/>
</dbReference>
<dbReference type="GO" id="GO:0036064">
    <property type="term" value="C:ciliary basal body"/>
    <property type="evidence" value="ECO:0007669"/>
    <property type="project" value="Ensembl"/>
</dbReference>
<dbReference type="GO" id="GO:0005829">
    <property type="term" value="C:cytosol"/>
    <property type="evidence" value="ECO:0007669"/>
    <property type="project" value="Ensembl"/>
</dbReference>
<dbReference type="GO" id="GO:0000791">
    <property type="term" value="C:euchromatin"/>
    <property type="evidence" value="ECO:0000266"/>
    <property type="project" value="RGD"/>
</dbReference>
<dbReference type="GO" id="GO:0005759">
    <property type="term" value="C:mitochondrial matrix"/>
    <property type="evidence" value="ECO:0000314"/>
    <property type="project" value="RGD"/>
</dbReference>
<dbReference type="GO" id="GO:0005654">
    <property type="term" value="C:nucleoplasm"/>
    <property type="evidence" value="ECO:0000304"/>
    <property type="project" value="Reactome"/>
</dbReference>
<dbReference type="GO" id="GO:0005634">
    <property type="term" value="C:nucleus"/>
    <property type="evidence" value="ECO:0000314"/>
    <property type="project" value="MGI"/>
</dbReference>
<dbReference type="GO" id="GO:0090575">
    <property type="term" value="C:RNA polymerase II transcription regulator complex"/>
    <property type="evidence" value="ECO:0000266"/>
    <property type="project" value="RGD"/>
</dbReference>
<dbReference type="GO" id="GO:0005667">
    <property type="term" value="C:transcription regulator complex"/>
    <property type="evidence" value="ECO:0000314"/>
    <property type="project" value="RGD"/>
</dbReference>
<dbReference type="GO" id="GO:1990763">
    <property type="term" value="F:arrestin family protein binding"/>
    <property type="evidence" value="ECO:0000353"/>
    <property type="project" value="RGD"/>
</dbReference>
<dbReference type="GO" id="GO:0035497">
    <property type="term" value="F:cAMP response element binding"/>
    <property type="evidence" value="ECO:0000266"/>
    <property type="project" value="RGD"/>
</dbReference>
<dbReference type="GO" id="GO:0003677">
    <property type="term" value="F:DNA binding"/>
    <property type="evidence" value="ECO:0000266"/>
    <property type="project" value="RGD"/>
</dbReference>
<dbReference type="GO" id="GO:0001228">
    <property type="term" value="F:DNA-binding transcription activator activity, RNA polymerase II-specific"/>
    <property type="evidence" value="ECO:0000266"/>
    <property type="project" value="RGD"/>
</dbReference>
<dbReference type="GO" id="GO:0003700">
    <property type="term" value="F:DNA-binding transcription factor activity"/>
    <property type="evidence" value="ECO:0000315"/>
    <property type="project" value="RGD"/>
</dbReference>
<dbReference type="GO" id="GO:0000981">
    <property type="term" value="F:DNA-binding transcription factor activity, RNA polymerase II-specific"/>
    <property type="evidence" value="ECO:0000314"/>
    <property type="project" value="RGD"/>
</dbReference>
<dbReference type="GO" id="GO:0003690">
    <property type="term" value="F:double-stranded DNA binding"/>
    <property type="evidence" value="ECO:0000314"/>
    <property type="project" value="RGD"/>
</dbReference>
<dbReference type="GO" id="GO:0019899">
    <property type="term" value="F:enzyme binding"/>
    <property type="evidence" value="ECO:0000266"/>
    <property type="project" value="RGD"/>
</dbReference>
<dbReference type="GO" id="GO:0035035">
    <property type="term" value="F:histone acetyltransferase binding"/>
    <property type="evidence" value="ECO:0000353"/>
    <property type="project" value="RGD"/>
</dbReference>
<dbReference type="GO" id="GO:0030544">
    <property type="term" value="F:Hsp70 protein binding"/>
    <property type="evidence" value="ECO:0000353"/>
    <property type="project" value="RGD"/>
</dbReference>
<dbReference type="GO" id="GO:0042802">
    <property type="term" value="F:identical protein binding"/>
    <property type="evidence" value="ECO:0000266"/>
    <property type="project" value="RGD"/>
</dbReference>
<dbReference type="GO" id="GO:0000978">
    <property type="term" value="F:RNA polymerase II cis-regulatory region sequence-specific DNA binding"/>
    <property type="evidence" value="ECO:0000266"/>
    <property type="project" value="RGD"/>
</dbReference>
<dbReference type="GO" id="GO:0000977">
    <property type="term" value="F:RNA polymerase II transcription regulatory region sequence-specific DNA binding"/>
    <property type="evidence" value="ECO:0000266"/>
    <property type="project" value="RGD"/>
</dbReference>
<dbReference type="GO" id="GO:0061629">
    <property type="term" value="F:RNA polymerase II-specific DNA-binding transcription factor binding"/>
    <property type="evidence" value="ECO:0000266"/>
    <property type="project" value="RGD"/>
</dbReference>
<dbReference type="GO" id="GO:0043565">
    <property type="term" value="F:sequence-specific DNA binding"/>
    <property type="evidence" value="ECO:0000314"/>
    <property type="project" value="RGD"/>
</dbReference>
<dbReference type="GO" id="GO:1990837">
    <property type="term" value="F:sequence-specific double-stranded DNA binding"/>
    <property type="evidence" value="ECO:0000266"/>
    <property type="project" value="RGD"/>
</dbReference>
<dbReference type="GO" id="GO:0000976">
    <property type="term" value="F:transcription cis-regulatory region binding"/>
    <property type="evidence" value="ECO:0000314"/>
    <property type="project" value="RGD"/>
</dbReference>
<dbReference type="GO" id="GO:0001223">
    <property type="term" value="F:transcription coactivator binding"/>
    <property type="evidence" value="ECO:0000353"/>
    <property type="project" value="CAFA"/>
</dbReference>
<dbReference type="GO" id="GO:0007409">
    <property type="term" value="P:axonogenesis"/>
    <property type="evidence" value="ECO:0000266"/>
    <property type="project" value="RGD"/>
</dbReference>
<dbReference type="GO" id="GO:0141156">
    <property type="term" value="P:cAMP/PKA signal transduction"/>
    <property type="evidence" value="ECO:0000266"/>
    <property type="project" value="RGD"/>
</dbReference>
<dbReference type="GO" id="GO:0030154">
    <property type="term" value="P:cell differentiation"/>
    <property type="evidence" value="ECO:0000315"/>
    <property type="project" value="RGD"/>
</dbReference>
<dbReference type="GO" id="GO:0071398">
    <property type="term" value="P:cellular response to fatty acid"/>
    <property type="evidence" value="ECO:0000270"/>
    <property type="project" value="RGD"/>
</dbReference>
<dbReference type="GO" id="GO:1904322">
    <property type="term" value="P:cellular response to forskolin"/>
    <property type="evidence" value="ECO:0000266"/>
    <property type="project" value="RGD"/>
</dbReference>
<dbReference type="GO" id="GO:0071363">
    <property type="term" value="P:cellular response to growth factor stimulus"/>
    <property type="evidence" value="ECO:0000266"/>
    <property type="project" value="RGD"/>
</dbReference>
<dbReference type="GO" id="GO:0035729">
    <property type="term" value="P:cellular response to hepatocyte growth factor stimulus"/>
    <property type="evidence" value="ECO:0000266"/>
    <property type="project" value="RGD"/>
</dbReference>
<dbReference type="GO" id="GO:1990314">
    <property type="term" value="P:cellular response to insulin-like growth factor stimulus"/>
    <property type="evidence" value="ECO:0000270"/>
    <property type="project" value="RGD"/>
</dbReference>
<dbReference type="GO" id="GO:1990830">
    <property type="term" value="P:cellular response to leukemia inhibitory factor"/>
    <property type="evidence" value="ECO:0000266"/>
    <property type="project" value="RGD"/>
</dbReference>
<dbReference type="GO" id="GO:1990090">
    <property type="term" value="P:cellular response to nerve growth factor stimulus"/>
    <property type="evidence" value="ECO:0000270"/>
    <property type="project" value="RGD"/>
</dbReference>
<dbReference type="GO" id="GO:0036120">
    <property type="term" value="P:cellular response to platelet-derived growth factor stimulus"/>
    <property type="evidence" value="ECO:0000270"/>
    <property type="project" value="RGD"/>
</dbReference>
<dbReference type="GO" id="GO:0071300">
    <property type="term" value="P:cellular response to retinoic acid"/>
    <property type="evidence" value="ECO:0000266"/>
    <property type="project" value="RGD"/>
</dbReference>
<dbReference type="GO" id="GO:0071560">
    <property type="term" value="P:cellular response to transforming growth factor beta stimulus"/>
    <property type="evidence" value="ECO:0000270"/>
    <property type="project" value="RGD"/>
</dbReference>
<dbReference type="GO" id="GO:0071294">
    <property type="term" value="P:cellular response to zinc ion"/>
    <property type="evidence" value="ECO:0000266"/>
    <property type="project" value="RGD"/>
</dbReference>
<dbReference type="GO" id="GO:0034670">
    <property type="term" value="P:chemotaxis to arachidonate"/>
    <property type="evidence" value="ECO:0000315"/>
    <property type="project" value="RGD"/>
</dbReference>
<dbReference type="GO" id="GO:0007623">
    <property type="term" value="P:circadian rhythm"/>
    <property type="evidence" value="ECO:0000270"/>
    <property type="project" value="RGD"/>
</dbReference>
<dbReference type="GO" id="GO:0046879">
    <property type="term" value="P:hormone secretion"/>
    <property type="evidence" value="ECO:0000266"/>
    <property type="project" value="RGD"/>
</dbReference>
<dbReference type="GO" id="GO:0007595">
    <property type="term" value="P:lactation"/>
    <property type="evidence" value="ECO:0000266"/>
    <property type="project" value="RGD"/>
</dbReference>
<dbReference type="GO" id="GO:0060428">
    <property type="term" value="P:lung epithelium development"/>
    <property type="evidence" value="ECO:0000266"/>
    <property type="project" value="RGD"/>
</dbReference>
<dbReference type="GO" id="GO:0060430">
    <property type="term" value="P:lung saccule development"/>
    <property type="evidence" value="ECO:0000266"/>
    <property type="project" value="RGD"/>
</dbReference>
<dbReference type="GO" id="GO:0030879">
    <property type="term" value="P:mammary gland development"/>
    <property type="evidence" value="ECO:0000266"/>
    <property type="project" value="RGD"/>
</dbReference>
<dbReference type="GO" id="GO:0007613">
    <property type="term" value="P:memory"/>
    <property type="evidence" value="ECO:0000315"/>
    <property type="project" value="RGD"/>
</dbReference>
<dbReference type="GO" id="GO:0042789">
    <property type="term" value="P:mRNA transcription by RNA polymerase II"/>
    <property type="evidence" value="ECO:0000266"/>
    <property type="project" value="RGD"/>
</dbReference>
<dbReference type="GO" id="GO:0043066">
    <property type="term" value="P:negative regulation of apoptotic process"/>
    <property type="evidence" value="ECO:0000315"/>
    <property type="project" value="UniProtKB"/>
</dbReference>
<dbReference type="GO" id="GO:0010629">
    <property type="term" value="P:negative regulation of gene expression"/>
    <property type="evidence" value="ECO:0000315"/>
    <property type="project" value="RGD"/>
</dbReference>
<dbReference type="GO" id="GO:0010944">
    <property type="term" value="P:negative regulation of transcription by competitive promoter binding"/>
    <property type="evidence" value="ECO:0000266"/>
    <property type="project" value="RGD"/>
</dbReference>
<dbReference type="GO" id="GO:0030316">
    <property type="term" value="P:osteoclast differentiation"/>
    <property type="evidence" value="ECO:0000266"/>
    <property type="project" value="RGD"/>
</dbReference>
<dbReference type="GO" id="GO:0021983">
    <property type="term" value="P:pituitary gland development"/>
    <property type="evidence" value="ECO:0000266"/>
    <property type="project" value="RGD"/>
</dbReference>
<dbReference type="GO" id="GO:0043065">
    <property type="term" value="P:positive regulation of apoptotic process"/>
    <property type="evidence" value="ECO:0000315"/>
    <property type="project" value="RGD"/>
</dbReference>
<dbReference type="GO" id="GO:0055025">
    <property type="term" value="P:positive regulation of cardiac muscle tissue development"/>
    <property type="evidence" value="ECO:0000266"/>
    <property type="project" value="RGD"/>
</dbReference>
<dbReference type="GO" id="GO:0045893">
    <property type="term" value="P:positive regulation of DNA-templated transcription"/>
    <property type="evidence" value="ECO:0000250"/>
    <property type="project" value="UniProtKB"/>
</dbReference>
<dbReference type="GO" id="GO:0045600">
    <property type="term" value="P:positive regulation of fat cell differentiation"/>
    <property type="evidence" value="ECO:0000250"/>
    <property type="project" value="UniProtKB"/>
</dbReference>
<dbReference type="GO" id="GO:0046887">
    <property type="term" value="P:positive regulation of hormone secretion"/>
    <property type="evidence" value="ECO:0000266"/>
    <property type="project" value="RGD"/>
</dbReference>
<dbReference type="GO" id="GO:0046889">
    <property type="term" value="P:positive regulation of lipid biosynthetic process"/>
    <property type="evidence" value="ECO:0000250"/>
    <property type="project" value="UniProtKB"/>
</dbReference>
<dbReference type="GO" id="GO:1900273">
    <property type="term" value="P:positive regulation of long-term synaptic potentiation"/>
    <property type="evidence" value="ECO:0000315"/>
    <property type="project" value="RGD"/>
</dbReference>
<dbReference type="GO" id="GO:1904181">
    <property type="term" value="P:positive regulation of membrane depolarization"/>
    <property type="evidence" value="ECO:0000315"/>
    <property type="project" value="RGD"/>
</dbReference>
<dbReference type="GO" id="GO:0040018">
    <property type="term" value="P:positive regulation of multicellular organism growth"/>
    <property type="evidence" value="ECO:0000266"/>
    <property type="project" value="RGD"/>
</dbReference>
<dbReference type="GO" id="GO:0045672">
    <property type="term" value="P:positive regulation of osteoclast differentiation"/>
    <property type="evidence" value="ECO:0000266"/>
    <property type="project" value="RGD"/>
</dbReference>
<dbReference type="GO" id="GO:0045899">
    <property type="term" value="P:positive regulation of RNA polymerase II transcription preinitiation complex assembly"/>
    <property type="evidence" value="ECO:0000315"/>
    <property type="project" value="RGD"/>
</dbReference>
<dbReference type="GO" id="GO:0045944">
    <property type="term" value="P:positive regulation of transcription by RNA polymerase II"/>
    <property type="evidence" value="ECO:0000314"/>
    <property type="project" value="RGD"/>
</dbReference>
<dbReference type="GO" id="GO:0032916">
    <property type="term" value="P:positive regulation of transforming growth factor beta3 production"/>
    <property type="evidence" value="ECO:0000315"/>
    <property type="project" value="RGD"/>
</dbReference>
<dbReference type="GO" id="GO:0050821">
    <property type="term" value="P:protein stabilization"/>
    <property type="evidence" value="ECO:0000250"/>
    <property type="project" value="UniProtKB"/>
</dbReference>
<dbReference type="GO" id="GO:0042981">
    <property type="term" value="P:regulation of apoptotic process"/>
    <property type="evidence" value="ECO:0000314"/>
    <property type="project" value="RGD"/>
</dbReference>
<dbReference type="GO" id="GO:0008361">
    <property type="term" value="P:regulation of cell size"/>
    <property type="evidence" value="ECO:0000266"/>
    <property type="project" value="RGD"/>
</dbReference>
<dbReference type="GO" id="GO:0006355">
    <property type="term" value="P:regulation of DNA-templated transcription"/>
    <property type="evidence" value="ECO:0000266"/>
    <property type="project" value="RGD"/>
</dbReference>
<dbReference type="GO" id="GO:0048145">
    <property type="term" value="P:regulation of fibroblast proliferation"/>
    <property type="evidence" value="ECO:0000315"/>
    <property type="project" value="RGD"/>
</dbReference>
<dbReference type="GO" id="GO:0060251">
    <property type="term" value="P:regulation of glial cell proliferation"/>
    <property type="evidence" value="ECO:0000315"/>
    <property type="project" value="RGD"/>
</dbReference>
<dbReference type="GO" id="GO:2000224">
    <property type="term" value="P:regulation of testosterone biosynthetic process"/>
    <property type="evidence" value="ECO:0000266"/>
    <property type="project" value="RGD"/>
</dbReference>
<dbReference type="GO" id="GO:0006357">
    <property type="term" value="P:regulation of transcription by RNA polymerase II"/>
    <property type="evidence" value="ECO:0000266"/>
    <property type="project" value="RGD"/>
</dbReference>
<dbReference type="GO" id="GO:0014823">
    <property type="term" value="P:response to activity"/>
    <property type="evidence" value="ECO:0000270"/>
    <property type="project" value="RGD"/>
</dbReference>
<dbReference type="GO" id="GO:0042220">
    <property type="term" value="P:response to cocaine"/>
    <property type="evidence" value="ECO:0000270"/>
    <property type="project" value="RGD"/>
</dbReference>
<dbReference type="GO" id="GO:1903494">
    <property type="term" value="P:response to dehydroepiandrosterone"/>
    <property type="evidence" value="ECO:0000270"/>
    <property type="project" value="RGD"/>
</dbReference>
<dbReference type="GO" id="GO:0036017">
    <property type="term" value="P:response to erythropoietin"/>
    <property type="evidence" value="ECO:0000314"/>
    <property type="project" value="RGD"/>
</dbReference>
<dbReference type="GO" id="GO:0045471">
    <property type="term" value="P:response to ethanol"/>
    <property type="evidence" value="ECO:0000314"/>
    <property type="project" value="RGD"/>
</dbReference>
<dbReference type="GO" id="GO:0033762">
    <property type="term" value="P:response to glucagon"/>
    <property type="evidence" value="ECO:0000250"/>
    <property type="project" value="UniProtKB"/>
</dbReference>
<dbReference type="GO" id="GO:1990910">
    <property type="term" value="P:response to hypobaric hypoxia"/>
    <property type="evidence" value="ECO:0000270"/>
    <property type="project" value="RGD"/>
</dbReference>
<dbReference type="GO" id="GO:0001666">
    <property type="term" value="P:response to hypoxia"/>
    <property type="evidence" value="ECO:0000270"/>
    <property type="project" value="RGD"/>
</dbReference>
<dbReference type="GO" id="GO:1902065">
    <property type="term" value="P:response to L-glutamate"/>
    <property type="evidence" value="ECO:0000270"/>
    <property type="project" value="RGD"/>
</dbReference>
<dbReference type="GO" id="GO:0043278">
    <property type="term" value="P:response to morphine"/>
    <property type="evidence" value="ECO:0000270"/>
    <property type="project" value="RGD"/>
</dbReference>
<dbReference type="GO" id="GO:0035094">
    <property type="term" value="P:response to nicotine"/>
    <property type="evidence" value="ECO:0000270"/>
    <property type="project" value="RGD"/>
</dbReference>
<dbReference type="GO" id="GO:0014074">
    <property type="term" value="P:response to purine-containing compound"/>
    <property type="evidence" value="ECO:0000266"/>
    <property type="project" value="RGD"/>
</dbReference>
<dbReference type="GO" id="GO:0009410">
    <property type="term" value="P:response to xenobiotic stimulus"/>
    <property type="evidence" value="ECO:0000270"/>
    <property type="project" value="RGD"/>
</dbReference>
<dbReference type="GO" id="GO:0033363">
    <property type="term" value="P:secretory granule organization"/>
    <property type="evidence" value="ECO:0000266"/>
    <property type="project" value="RGD"/>
</dbReference>
<dbReference type="GO" id="GO:0006366">
    <property type="term" value="P:transcription by RNA polymerase II"/>
    <property type="evidence" value="ECO:0000315"/>
    <property type="project" value="RGD"/>
</dbReference>
<dbReference type="GO" id="GO:0007179">
    <property type="term" value="P:transforming growth factor beta receptor signaling pathway"/>
    <property type="evidence" value="ECO:0000315"/>
    <property type="project" value="RGD"/>
</dbReference>
<dbReference type="GO" id="GO:0060509">
    <property type="term" value="P:type I pneumocyte differentiation"/>
    <property type="evidence" value="ECO:0000266"/>
    <property type="project" value="RGD"/>
</dbReference>
<dbReference type="GO" id="GO:0008542">
    <property type="term" value="P:visual learning"/>
    <property type="evidence" value="ECO:0000315"/>
    <property type="project" value="RGD"/>
</dbReference>
<dbReference type="CDD" id="cd14690">
    <property type="entry name" value="bZIP_CREB1"/>
    <property type="match status" value="1"/>
</dbReference>
<dbReference type="FunFam" id="1.20.5.170:FF:000003">
    <property type="entry name" value="cAMP-responsive element modulator isoform X2"/>
    <property type="match status" value="1"/>
</dbReference>
<dbReference type="Gene3D" id="1.20.5.170">
    <property type="match status" value="1"/>
</dbReference>
<dbReference type="IDEAL" id="IID50004"/>
<dbReference type="InterPro" id="IPR004827">
    <property type="entry name" value="bZIP"/>
</dbReference>
<dbReference type="InterPro" id="IPR046347">
    <property type="entry name" value="bZIP_sf"/>
</dbReference>
<dbReference type="InterPro" id="IPR003102">
    <property type="entry name" value="CREB1-like_pKID"/>
</dbReference>
<dbReference type="InterPro" id="IPR001630">
    <property type="entry name" value="Leuzip_CREB"/>
</dbReference>
<dbReference type="PANTHER" id="PTHR45879">
    <property type="entry name" value="CYCLIC AMP RESPONSE ELEMENT-BINDING PROTEIN B"/>
    <property type="match status" value="1"/>
</dbReference>
<dbReference type="PANTHER" id="PTHR45879:SF1">
    <property type="entry name" value="CYCLIC AMP-RESPONSIVE ELEMENT-BINDING PROTEIN 1"/>
    <property type="match status" value="1"/>
</dbReference>
<dbReference type="Pfam" id="PF00170">
    <property type="entry name" value="bZIP_1"/>
    <property type="match status" value="1"/>
</dbReference>
<dbReference type="Pfam" id="PF02173">
    <property type="entry name" value="pKID"/>
    <property type="match status" value="1"/>
</dbReference>
<dbReference type="PRINTS" id="PR00041">
    <property type="entry name" value="LEUZIPPRCREB"/>
</dbReference>
<dbReference type="SMART" id="SM00338">
    <property type="entry name" value="BRLZ"/>
    <property type="match status" value="1"/>
</dbReference>
<dbReference type="SUPFAM" id="SSF57959">
    <property type="entry name" value="Leucine zipper domain"/>
    <property type="match status" value="1"/>
</dbReference>
<dbReference type="PROSITE" id="PS50217">
    <property type="entry name" value="BZIP"/>
    <property type="match status" value="1"/>
</dbReference>
<dbReference type="PROSITE" id="PS00036">
    <property type="entry name" value="BZIP_BASIC"/>
    <property type="match status" value="1"/>
</dbReference>
<dbReference type="PROSITE" id="PS50953">
    <property type="entry name" value="KID"/>
    <property type="match status" value="1"/>
</dbReference>
<protein>
    <recommendedName>
        <fullName>Cyclic AMP-responsive element-binding protein 1</fullName>
        <shortName>CREB-1</shortName>
        <shortName>cAMP-responsive element-binding protein 1</shortName>
    </recommendedName>
</protein>
<evidence type="ECO:0000250" key="1"/>
<evidence type="ECO:0000250" key="2">
    <source>
        <dbReference type="UniProtKB" id="P16220"/>
    </source>
</evidence>
<evidence type="ECO:0000250" key="3">
    <source>
        <dbReference type="UniProtKB" id="P27925"/>
    </source>
</evidence>
<evidence type="ECO:0000250" key="4">
    <source>
        <dbReference type="UniProtKB" id="Q01147"/>
    </source>
</evidence>
<evidence type="ECO:0000255" key="5">
    <source>
        <dbReference type="PROSITE-ProRule" id="PRU00312"/>
    </source>
</evidence>
<evidence type="ECO:0000255" key="6">
    <source>
        <dbReference type="PROSITE-ProRule" id="PRU00978"/>
    </source>
</evidence>
<evidence type="ECO:0000256" key="7">
    <source>
        <dbReference type="SAM" id="MobiDB-lite"/>
    </source>
</evidence>
<evidence type="ECO:0000269" key="8">
    <source>
    </source>
</evidence>
<evidence type="ECO:0000269" key="9">
    <source>
    </source>
</evidence>
<evidence type="ECO:0000269" key="10">
    <source>
    </source>
</evidence>
<evidence type="ECO:0000269" key="11">
    <source>
    </source>
</evidence>
<evidence type="ECO:0000305" key="12"/>
<evidence type="ECO:0007744" key="13">
    <source>
    </source>
</evidence>
<evidence type="ECO:0007829" key="14">
    <source>
        <dbReference type="PDB" id="1KDX"/>
    </source>
</evidence>
<gene>
    <name type="primary">Creb1</name>
    <name type="synonym">Creb-1</name>
</gene>
<sequence>MTMDSGADNQQSGDAAVTEAESQQMTVQAQPQIATLAQVSMPAAHATSSAPTVTLVQLPNGQTVQVHGVIQAAQPSVIQSPQVQTVQISTIAESEDSQESVDSVTDSQKRREILSRRPSYRKILNDLSSDAPGVPRIEEEKSEEETSAPAITTVTVPTPIYQTSSGQYIAITQGGAIQLANNGTDGVQGLQTLTMTNAAATQPGTTILQYAQTTDGQQILVPSNQVVVQAASGDVQTYQIRTAPTSTIAPGVVMASSPALPTQPAEEAARKREVRLMKNREAARECRRKKKEYVKCLENRVAVLENQNKTLIEELKALKDLYCHKSD</sequence>
<keyword id="KW-0002">3D-structure</keyword>
<keyword id="KW-0010">Activator</keyword>
<keyword id="KW-0025">Alternative splicing</keyword>
<keyword id="KW-0090">Biological rhythms</keyword>
<keyword id="KW-0221">Differentiation</keyword>
<keyword id="KW-0903">Direct protein sequencing</keyword>
<keyword id="KW-0238">DNA-binding</keyword>
<keyword id="KW-1017">Isopeptide bond</keyword>
<keyword id="KW-0539">Nucleus</keyword>
<keyword id="KW-0597">Phosphoprotein</keyword>
<keyword id="KW-1185">Reference proteome</keyword>
<keyword id="KW-0804">Transcription</keyword>
<keyword id="KW-0805">Transcription regulation</keyword>
<keyword id="KW-0832">Ubl conjugation</keyword>
<name>CREB1_RAT</name>
<feature type="chain" id="PRO_0000076599" description="Cyclic AMP-responsive element-binding protein 1">
    <location>
        <begin position="1"/>
        <end position="327"/>
    </location>
</feature>
<feature type="domain" description="KID" evidence="5">
    <location>
        <begin position="8"/>
        <end position="146"/>
    </location>
</feature>
<feature type="domain" description="bZIP" evidence="6">
    <location>
        <begin position="269"/>
        <end position="327"/>
    </location>
</feature>
<feature type="region of interest" description="Disordered" evidence="7">
    <location>
        <begin position="1"/>
        <end position="29"/>
    </location>
</feature>
<feature type="region of interest" description="Disordered" evidence="7">
    <location>
        <begin position="94"/>
        <end position="113"/>
    </location>
</feature>
<feature type="region of interest" description="Disordered" evidence="7">
    <location>
        <begin position="126"/>
        <end position="149"/>
    </location>
</feature>
<feature type="region of interest" description="Basic motif" evidence="6">
    <location>
        <begin position="270"/>
        <end position="295"/>
    </location>
</feature>
<feature type="region of interest" description="Leucine-zipper" evidence="6">
    <location>
        <begin position="297"/>
        <end position="318"/>
    </location>
</feature>
<feature type="compositionally biased region" description="Polar residues" evidence="7">
    <location>
        <begin position="20"/>
        <end position="29"/>
    </location>
</feature>
<feature type="modified residue" description="Phosphoserine; by CaMK1, CaMK2, CaMK4, PKB/AKT1 or PKB/AKT2, RPS6KA3, RPS6KA4, RPS6KA5 and SGK1" evidence="5 8 10 11">
    <location>
        <position position="119"/>
    </location>
</feature>
<feature type="modified residue" description="Phosphoserine; by CaMK2" evidence="5 10 13">
    <location>
        <position position="128"/>
    </location>
</feature>
<feature type="modified residue" description="Phosphoserine; by HIPK2" evidence="2 5">
    <location>
        <position position="257"/>
    </location>
</feature>
<feature type="cross-link" description="Glycyl lysine isopeptide (Lys-Gly) (interchain with G-Cter in SUMO2)" evidence="2">
    <location>
        <position position="122"/>
    </location>
</feature>
<feature type="cross-link" description="Glycyl lysine isopeptide (Lys-Gly) (interchain with G-Cter in SUMO1)" evidence="2">
    <location>
        <position position="271"/>
    </location>
</feature>
<feature type="cross-link" description="Glycyl lysine isopeptide (Lys-Gly) (interchain with G-Cter in SUMO1)" evidence="2">
    <location>
        <position position="290"/>
    </location>
</feature>
<feature type="splice variant" id="VSP_060705" description="In isoform 2." evidence="12">
    <original>V</original>
    <variation>VQSSCKDLKRLFSGT</variation>
    <location>
        <position position="86"/>
    </location>
</feature>
<feature type="mutagenesis site" description="Loss of activation by CaMK4." evidence="10">
    <original>S</original>
    <variation>A</variation>
    <location>
        <position position="119"/>
    </location>
</feature>
<feature type="mutagenesis site" description="Loss of phosphorylation by CaMK2. Activation by CaMK2." evidence="10">
    <original>S</original>
    <variation>A</variation>
    <location>
        <position position="128"/>
    </location>
</feature>
<feature type="sequence conflict" description="In Ref. 2; CAA42619." evidence="12" ref="2">
    <original>R</original>
    <variation>K</variation>
    <location>
        <position position="121"/>
    </location>
</feature>
<feature type="sequence conflict" description="In Ref. 2; CAA42619." evidence="12" ref="2">
    <original>E</original>
    <variation>K</variation>
    <location>
        <position position="305"/>
    </location>
</feature>
<feature type="helix" evidence="14">
    <location>
        <begin position="106"/>
        <end position="114"/>
    </location>
</feature>
<feature type="helix" evidence="14">
    <location>
        <begin position="119"/>
        <end position="130"/>
    </location>
</feature>
<comment type="function">
    <text evidence="2 3 4 9">Phosphorylation-dependent transcription factor that stimulates transcription upon binding to the DNA cAMP response element (CRE), a sequence present in many viral and cellular promoters (By similarity). Transcription activation is enhanced by the TORC coactivators which act independently of Ser-119 phosphorylation (By similarity). Involved in different cellular processes including the synchronization of circadian rhythmicity and the differentiation of adipose cells (By similarity). Regulates the expression of apoptotic and inflammatory response factors in cardiomyocytes in response to ERFE-mediated activation of AKT signaling (PubMed:30566056).</text>
</comment>
<comment type="subunit">
    <text evidence="2 4">Interacts with PPRC1. Binds DNA as a dimer. This dimer is stabilized by magnesium ions. Interacts, through the bZIP domain, with the coactivators CRTC1/TORC1, CRTC2/TORC2 and CRTC3/TORC3. When phosphorylated on Ser-119, binds CREBBP (By similarity). Interacts with CREBL2; regulates CREB1 phosphorylation, stability and transcriptional activity (By similarity). Interacts (phosphorylated form) with TOX3. Interacts with ARRB1. Binds to HIPK2. Interacts with SGK1. Interacts with TSSK4; this interaction facilitates phosphorylation on Ser-119. Forms a complex with KMT2A and CREBBP (By similarity). Interacts with TOX4; CREB1 is required for full induction of TOX4-dependent activity and the interaction is increased by cAMP and inhibited by insulin (By similarity).</text>
</comment>
<comment type="subcellular location">
    <subcellularLocation>
        <location>Nucleus</location>
    </subcellularLocation>
</comment>
<comment type="alternative products">
    <event type="alternative splicing"/>
    <isoform>
        <id>P15337-2</id>
        <name>1</name>
        <name>Delta</name>
        <sequence type="displayed"/>
    </isoform>
    <isoform>
        <id>P15337-1</id>
        <name>2</name>
        <name>Alpha</name>
        <sequence type="described" ref="VSP_060705"/>
    </isoform>
</comment>
<comment type="PTM">
    <text evidence="2">Phosphorylation of Ser-119 allows CREBBP binding. Stimulated by phosphorylation. Phosphorylation of both Ser-128 and Ser-119 in the SCN regulates the activity of CREB and participate in circadian rhythm generation (By similarity). Phosphorylated upon calcium influx by CaMK4 and CaMK2 on Ser-119. CaMK4 is much more potent than CaMK2 in activating CREB. Phosphorylated by CaMK2 on Ser-128. Phosphorylation of Ser-128 blocks CREB-mediated transcription even when Ser-119 is phosphorylated. Phosphorylated by CaMK1. Phosphorylation of Ser-257 by HIPK2 in response to genotoxic stress promotes CREB1 activity, facilitating the recruitment of the coactivator CBP. Phosphorylated at Ser-119 by RPS6KA3, RPS6KA4 and RPS6KA5 in response to mitogenic or stress stimuli (By similarity). CREBL2 positively regulates phosphorylation at Ser-119 thereby stimulating CREB1 transcriptional activity. In liver, phosphorylation is induced by fasting or glucagon in a circadian fashion (By similarity). Phosphorylated by TSSK4 on Ser-119 (By similarity).</text>
</comment>
<comment type="PTM">
    <text evidence="1">Sumoylated with SUMO1. Sumoylation on Lys-290, but not on Lys-271, is required for nuclear localization of this protein. Sumoylation is enhanced under hypoxia, promoting nuclear localization and stabilization (By similarity).</text>
</comment>
<comment type="similarity">
    <text evidence="12">Belongs to the bZIP family.</text>
</comment>
<organism>
    <name type="scientific">Rattus norvegicus</name>
    <name type="common">Rat</name>
    <dbReference type="NCBI Taxonomy" id="10116"/>
    <lineage>
        <taxon>Eukaryota</taxon>
        <taxon>Metazoa</taxon>
        <taxon>Chordata</taxon>
        <taxon>Craniata</taxon>
        <taxon>Vertebrata</taxon>
        <taxon>Euteleostomi</taxon>
        <taxon>Mammalia</taxon>
        <taxon>Eutheria</taxon>
        <taxon>Euarchontoglires</taxon>
        <taxon>Glires</taxon>
        <taxon>Rodentia</taxon>
        <taxon>Myomorpha</taxon>
        <taxon>Muroidea</taxon>
        <taxon>Muridae</taxon>
        <taxon>Murinae</taxon>
        <taxon>Rattus</taxon>
    </lineage>
</organism>
<reference key="1">
    <citation type="journal article" date="1989" name="Nature">
        <title>A cluster of phosphorylation sites on the cyclic AMP-regulated nuclear factor CREB predicted by its sequence.</title>
        <authorList>
            <person name="Gonzalez G.A."/>
            <person name="Yamamoto K.K."/>
            <person name="Fischer W.H."/>
            <person name="Karr D."/>
            <person name="Menzel P."/>
            <person name="Biggs W. III"/>
            <person name="Vale W.W."/>
            <person name="Montminy M.R."/>
        </authorList>
    </citation>
    <scope>NUCLEOTIDE SEQUENCE [MRNA] (ISOFORM 2)</scope>
    <scope>PARTIAL PROTEIN SEQUENCE</scope>
</reference>
<reference key="2">
    <citation type="journal article" date="1991" name="Nucleic Acids Res.">
        <title>Nucleotide and derived amino-acid sequences of the CRE-binding proteins from rat C6 glioma and HeLa cells.</title>
        <authorList>
            <person name="Short M.L."/>
            <person name="Manohar C.F."/>
            <person name="Furtado M.R."/>
            <person name="Ghadge G.D."/>
            <person name="Wolinsky S.M."/>
            <person name="Thimmapaya B."/>
            <person name="Jungmann R.A."/>
        </authorList>
    </citation>
    <scope>NUCLEOTIDE SEQUENCE [MRNA] (ISOFORM 1)</scope>
</reference>
<reference key="3">
    <citation type="journal article" date="1991" name="Science">
        <title>CREB: a Ca(2+)-regulated transcription factor phosphorylated by calmodulin-dependent kinases.</title>
        <authorList>
            <person name="Sheng M."/>
            <person name="Thompson M.A."/>
            <person name="Greenberg M.E."/>
        </authorList>
    </citation>
    <scope>PHOSPHORYLATION AT SER-119</scope>
    <scope>PHOSPHORYLATION BY CAMK1 AND CAMK4</scope>
</reference>
<reference key="4">
    <citation type="journal article" date="1994" name="Genes Dev.">
        <title>Differential activation of CREB by Ca2+/calmodulin-dependent protein kinases type II and type IV involves phosphorylation of a site that negatively regulates activity.</title>
        <authorList>
            <person name="Sun P."/>
            <person name="Enslen H."/>
            <person name="Myung P.S."/>
            <person name="Maurer R.A."/>
        </authorList>
    </citation>
    <scope>PHOSPHORYLATION AT SER-119 AND SER-128</scope>
    <scope>MUTAGENESIS OF SER-119 AND SER-128</scope>
</reference>
<reference key="5">
    <citation type="journal article" date="1996" name="J. Biol. Chem.">
        <title>Regulation of activating transcription factor-1 and the cAMP response element-binding protein by Ca2+/calmodulin-dependent protein kinases type I, II, and IV.</title>
        <authorList>
            <person name="Sun P."/>
            <person name="Lou L."/>
            <person name="Maurer R.A."/>
        </authorList>
    </citation>
    <scope>PHOSPHORYLATION AT SER-119</scope>
    <scope>PHOSPHORYLATION BY CAMK1</scope>
</reference>
<reference key="6">
    <citation type="journal article" date="2012" name="Nat. Commun.">
        <title>Quantitative maps of protein phosphorylation sites across 14 different rat organs and tissues.</title>
        <authorList>
            <person name="Lundby A."/>
            <person name="Secher A."/>
            <person name="Lage K."/>
            <person name="Nordsborg N.B."/>
            <person name="Dmytriyev A."/>
            <person name="Lundby C."/>
            <person name="Olsen J.V."/>
        </authorList>
    </citation>
    <scope>PHOSPHORYLATION [LARGE SCALE ANALYSIS] AT SER-128</scope>
    <scope>IDENTIFICATION BY MASS SPECTROMETRY [LARGE SCALE ANALYSIS]</scope>
</reference>
<reference key="7">
    <citation type="journal article" date="2018" name="Circ. Res.">
        <title>Myonectin Is an Exercise-Induced Myokine That Protects the Heart From Ischemia-Reperfusion Injury.</title>
        <authorList>
            <person name="Otaka N."/>
            <person name="Shibata R."/>
            <person name="Ohashi K."/>
            <person name="Uemura Y."/>
            <person name="Kambara T."/>
            <person name="Enomoto T."/>
            <person name="Ogawa H."/>
            <person name="Ito M."/>
            <person name="Kawanishi H."/>
            <person name="Maruyama S."/>
            <person name="Joki Y."/>
            <person name="Fujikawa Y."/>
            <person name="Narita S."/>
            <person name="Unno K."/>
            <person name="Kawamoto Y."/>
            <person name="Murate T."/>
            <person name="Murohara T."/>
            <person name="Ouchi N."/>
        </authorList>
    </citation>
    <scope>FUNCTION</scope>
</reference>
<reference key="8">
    <citation type="journal article" date="1999" name="J. Mol. Biol.">
        <title>Structural analyses of CREB-CBP transcriptional activator-coactivator complexes by NMR spectroscopy: implications for mapping the boundaries of structural domains.</title>
        <authorList>
            <person name="Radhakrishnan I."/>
            <person name="Perez-Alvarado G.C."/>
            <person name="Parker D."/>
            <person name="Dyson H.J."/>
            <person name="Montminy M.R."/>
            <person name="Wright P.E."/>
        </authorList>
    </citation>
    <scope>STRUCTURE BY NMR OF 105-132 IN COMPLEX WITH CREBBP</scope>
</reference>
<accession>P15337</accession>
<proteinExistence type="evidence at protein level"/>